<comment type="function">
    <text evidence="1">One of the primary rRNA binding proteins, it binds directly to 16S rRNA where it nucleates assembly of the body of the 30S subunit.</text>
</comment>
<comment type="function">
    <text evidence="1">With S5 and S12 plays an important role in translational accuracy.</text>
</comment>
<comment type="subunit">
    <text evidence="1">Part of the 30S ribosomal subunit. Contacts protein S5. The interaction surface between S4 and S5 is involved in control of translational fidelity.</text>
</comment>
<comment type="similarity">
    <text evidence="1">Belongs to the universal ribosomal protein uS4 family.</text>
</comment>
<organism>
    <name type="scientific">Leptospira interrogans serogroup Icterohaemorrhagiae serovar copenhageni (strain Fiocruz L1-130)</name>
    <dbReference type="NCBI Taxonomy" id="267671"/>
    <lineage>
        <taxon>Bacteria</taxon>
        <taxon>Pseudomonadati</taxon>
        <taxon>Spirochaetota</taxon>
        <taxon>Spirochaetia</taxon>
        <taxon>Leptospirales</taxon>
        <taxon>Leptospiraceae</taxon>
        <taxon>Leptospira</taxon>
    </lineage>
</organism>
<keyword id="KW-0687">Ribonucleoprotein</keyword>
<keyword id="KW-0689">Ribosomal protein</keyword>
<keyword id="KW-0694">RNA-binding</keyword>
<keyword id="KW-0699">rRNA-binding</keyword>
<feature type="chain" id="PRO_0000132403" description="Small ribosomal subunit protein uS4">
    <location>
        <begin position="1"/>
        <end position="207"/>
    </location>
</feature>
<feature type="domain" description="S4 RNA-binding" evidence="1">
    <location>
        <begin position="96"/>
        <end position="156"/>
    </location>
</feature>
<name>RS4_LEPIC</name>
<reference key="1">
    <citation type="journal article" date="2004" name="J. Bacteriol.">
        <title>Comparative genomics of two Leptospira interrogans serovars reveals novel insights into physiology and pathogenesis.</title>
        <authorList>
            <person name="Nascimento A.L.T.O."/>
            <person name="Ko A.I."/>
            <person name="Martins E.A.L."/>
            <person name="Monteiro-Vitorello C.B."/>
            <person name="Ho P.L."/>
            <person name="Haake D.A."/>
            <person name="Verjovski-Almeida S."/>
            <person name="Hartskeerl R.A."/>
            <person name="Marques M.V."/>
            <person name="Oliveira M.C."/>
            <person name="Menck C.F.M."/>
            <person name="Leite L.C.C."/>
            <person name="Carrer H."/>
            <person name="Coutinho L.L."/>
            <person name="Degrave W.M."/>
            <person name="Dellagostin O.A."/>
            <person name="El-Dorry H."/>
            <person name="Ferro E.S."/>
            <person name="Ferro M.I.T."/>
            <person name="Furlan L.R."/>
            <person name="Gamberini M."/>
            <person name="Giglioti E.A."/>
            <person name="Goes-Neto A."/>
            <person name="Goldman G.H."/>
            <person name="Goldman M.H.S."/>
            <person name="Harakava R."/>
            <person name="Jeronimo S.M.B."/>
            <person name="Junqueira-de-Azevedo I.L.M."/>
            <person name="Kimura E.T."/>
            <person name="Kuramae E.E."/>
            <person name="Lemos E.G.M."/>
            <person name="Lemos M.V.F."/>
            <person name="Marino C.L."/>
            <person name="Nunes L.R."/>
            <person name="de Oliveira R.C."/>
            <person name="Pereira G.G."/>
            <person name="Reis M.S."/>
            <person name="Schriefer A."/>
            <person name="Siqueira W.J."/>
            <person name="Sommer P."/>
            <person name="Tsai S.M."/>
            <person name="Simpson A.J.G."/>
            <person name="Ferro J.A."/>
            <person name="Camargo L.E.A."/>
            <person name="Kitajima J.P."/>
            <person name="Setubal J.C."/>
            <person name="Van Sluys M.A."/>
        </authorList>
    </citation>
    <scope>NUCLEOTIDE SEQUENCE [LARGE SCALE GENOMIC DNA]</scope>
    <source>
        <strain>Fiocruz L1-130</strain>
    </source>
</reference>
<sequence>MARYRGPVVKIMRREGVDLFLKSSYTFNKDKFHRKGPPGMPTKRKGKVSEYGAQLREKQKLKRAYGLLEKQFRRYYEEASHAHGVTGEILLQLLERRLDNVVYRLGFAITRRQARNFIAHRHILVNGERVDIPSYRLNVGDKVEIREKFKTSSFIADNIKLSQSLQGIPSWLSADYTNFGGDVTALPERHHIDLPVKEQVIVELYSK</sequence>
<gene>
    <name evidence="1" type="primary">rpsD</name>
    <name type="ordered locus">LIC_12847</name>
</gene>
<evidence type="ECO:0000255" key="1">
    <source>
        <dbReference type="HAMAP-Rule" id="MF_01306"/>
    </source>
</evidence>
<evidence type="ECO:0000305" key="2"/>
<dbReference type="EMBL" id="AE016823">
    <property type="protein sequence ID" value="AAS71400.1"/>
    <property type="molecule type" value="Genomic_DNA"/>
</dbReference>
<dbReference type="RefSeq" id="WP_000135260.1">
    <property type="nucleotide sequence ID" value="NC_005823.1"/>
</dbReference>
<dbReference type="SMR" id="Q72NI7"/>
<dbReference type="GeneID" id="61142721"/>
<dbReference type="KEGG" id="lic:LIC_12847"/>
<dbReference type="HOGENOM" id="CLU_092403_0_2_12"/>
<dbReference type="Proteomes" id="UP000007037">
    <property type="component" value="Chromosome I"/>
</dbReference>
<dbReference type="GO" id="GO:0015935">
    <property type="term" value="C:small ribosomal subunit"/>
    <property type="evidence" value="ECO:0007669"/>
    <property type="project" value="InterPro"/>
</dbReference>
<dbReference type="GO" id="GO:0019843">
    <property type="term" value="F:rRNA binding"/>
    <property type="evidence" value="ECO:0007669"/>
    <property type="project" value="UniProtKB-UniRule"/>
</dbReference>
<dbReference type="GO" id="GO:0003735">
    <property type="term" value="F:structural constituent of ribosome"/>
    <property type="evidence" value="ECO:0007669"/>
    <property type="project" value="InterPro"/>
</dbReference>
<dbReference type="GO" id="GO:0042274">
    <property type="term" value="P:ribosomal small subunit biogenesis"/>
    <property type="evidence" value="ECO:0007669"/>
    <property type="project" value="TreeGrafter"/>
</dbReference>
<dbReference type="GO" id="GO:0006412">
    <property type="term" value="P:translation"/>
    <property type="evidence" value="ECO:0007669"/>
    <property type="project" value="UniProtKB-UniRule"/>
</dbReference>
<dbReference type="CDD" id="cd00165">
    <property type="entry name" value="S4"/>
    <property type="match status" value="1"/>
</dbReference>
<dbReference type="FunFam" id="3.10.290.10:FF:000001">
    <property type="entry name" value="30S ribosomal protein S4"/>
    <property type="match status" value="1"/>
</dbReference>
<dbReference type="Gene3D" id="1.10.1050.10">
    <property type="entry name" value="Ribosomal Protein S4 Delta 41, Chain A, domain 1"/>
    <property type="match status" value="1"/>
</dbReference>
<dbReference type="Gene3D" id="3.10.290.10">
    <property type="entry name" value="RNA-binding S4 domain"/>
    <property type="match status" value="1"/>
</dbReference>
<dbReference type="HAMAP" id="MF_01306_B">
    <property type="entry name" value="Ribosomal_uS4_B"/>
    <property type="match status" value="1"/>
</dbReference>
<dbReference type="InterPro" id="IPR022801">
    <property type="entry name" value="Ribosomal_uS4"/>
</dbReference>
<dbReference type="InterPro" id="IPR005709">
    <property type="entry name" value="Ribosomal_uS4_bac-type"/>
</dbReference>
<dbReference type="InterPro" id="IPR018079">
    <property type="entry name" value="Ribosomal_uS4_CS"/>
</dbReference>
<dbReference type="InterPro" id="IPR001912">
    <property type="entry name" value="Ribosomal_uS4_N"/>
</dbReference>
<dbReference type="InterPro" id="IPR002942">
    <property type="entry name" value="S4_RNA-bd"/>
</dbReference>
<dbReference type="InterPro" id="IPR036986">
    <property type="entry name" value="S4_RNA-bd_sf"/>
</dbReference>
<dbReference type="NCBIfam" id="NF003717">
    <property type="entry name" value="PRK05327.1"/>
    <property type="match status" value="1"/>
</dbReference>
<dbReference type="NCBIfam" id="TIGR01017">
    <property type="entry name" value="rpsD_bact"/>
    <property type="match status" value="1"/>
</dbReference>
<dbReference type="PANTHER" id="PTHR11831">
    <property type="entry name" value="30S 40S RIBOSOMAL PROTEIN"/>
    <property type="match status" value="1"/>
</dbReference>
<dbReference type="PANTHER" id="PTHR11831:SF4">
    <property type="entry name" value="SMALL RIBOSOMAL SUBUNIT PROTEIN US4M"/>
    <property type="match status" value="1"/>
</dbReference>
<dbReference type="Pfam" id="PF00163">
    <property type="entry name" value="Ribosomal_S4"/>
    <property type="match status" value="1"/>
</dbReference>
<dbReference type="Pfam" id="PF01479">
    <property type="entry name" value="S4"/>
    <property type="match status" value="1"/>
</dbReference>
<dbReference type="SMART" id="SM01390">
    <property type="entry name" value="Ribosomal_S4"/>
    <property type="match status" value="1"/>
</dbReference>
<dbReference type="SMART" id="SM00363">
    <property type="entry name" value="S4"/>
    <property type="match status" value="1"/>
</dbReference>
<dbReference type="SUPFAM" id="SSF55174">
    <property type="entry name" value="Alpha-L RNA-binding motif"/>
    <property type="match status" value="1"/>
</dbReference>
<dbReference type="PROSITE" id="PS00632">
    <property type="entry name" value="RIBOSOMAL_S4"/>
    <property type="match status" value="1"/>
</dbReference>
<dbReference type="PROSITE" id="PS50889">
    <property type="entry name" value="S4"/>
    <property type="match status" value="1"/>
</dbReference>
<proteinExistence type="inferred from homology"/>
<protein>
    <recommendedName>
        <fullName evidence="1">Small ribosomal subunit protein uS4</fullName>
    </recommendedName>
    <alternativeName>
        <fullName evidence="2">30S ribosomal protein S4</fullName>
    </alternativeName>
</protein>
<accession>Q72NI7</accession>